<dbReference type="EMBL" id="CP001087">
    <property type="protein sequence ID" value="ACN16672.1"/>
    <property type="molecule type" value="Genomic_DNA"/>
</dbReference>
<dbReference type="RefSeq" id="WP_015905422.1">
    <property type="nucleotide sequence ID" value="NC_012108.1"/>
</dbReference>
<dbReference type="SMR" id="C0Q9V4"/>
<dbReference type="STRING" id="177437.HRM2_36070"/>
<dbReference type="KEGG" id="dat:HRM2_36070"/>
<dbReference type="eggNOG" id="COG0200">
    <property type="taxonomic scope" value="Bacteria"/>
</dbReference>
<dbReference type="HOGENOM" id="CLU_055188_4_2_7"/>
<dbReference type="OrthoDB" id="9810293at2"/>
<dbReference type="Proteomes" id="UP000000442">
    <property type="component" value="Chromosome"/>
</dbReference>
<dbReference type="GO" id="GO:0022625">
    <property type="term" value="C:cytosolic large ribosomal subunit"/>
    <property type="evidence" value="ECO:0007669"/>
    <property type="project" value="TreeGrafter"/>
</dbReference>
<dbReference type="GO" id="GO:0019843">
    <property type="term" value="F:rRNA binding"/>
    <property type="evidence" value="ECO:0007669"/>
    <property type="project" value="UniProtKB-UniRule"/>
</dbReference>
<dbReference type="GO" id="GO:0003735">
    <property type="term" value="F:structural constituent of ribosome"/>
    <property type="evidence" value="ECO:0007669"/>
    <property type="project" value="InterPro"/>
</dbReference>
<dbReference type="GO" id="GO:0006412">
    <property type="term" value="P:translation"/>
    <property type="evidence" value="ECO:0007669"/>
    <property type="project" value="UniProtKB-UniRule"/>
</dbReference>
<dbReference type="Gene3D" id="3.100.10.10">
    <property type="match status" value="1"/>
</dbReference>
<dbReference type="HAMAP" id="MF_01341">
    <property type="entry name" value="Ribosomal_uL15"/>
    <property type="match status" value="1"/>
</dbReference>
<dbReference type="InterPro" id="IPR030878">
    <property type="entry name" value="Ribosomal_uL15"/>
</dbReference>
<dbReference type="InterPro" id="IPR021131">
    <property type="entry name" value="Ribosomal_uL15/eL18"/>
</dbReference>
<dbReference type="InterPro" id="IPR036227">
    <property type="entry name" value="Ribosomal_uL15/eL18_sf"/>
</dbReference>
<dbReference type="InterPro" id="IPR005749">
    <property type="entry name" value="Ribosomal_uL15_bac-type"/>
</dbReference>
<dbReference type="InterPro" id="IPR001196">
    <property type="entry name" value="Ribosomal_uL15_CS"/>
</dbReference>
<dbReference type="NCBIfam" id="TIGR01071">
    <property type="entry name" value="rplO_bact"/>
    <property type="match status" value="1"/>
</dbReference>
<dbReference type="PANTHER" id="PTHR12934">
    <property type="entry name" value="50S RIBOSOMAL PROTEIN L15"/>
    <property type="match status" value="1"/>
</dbReference>
<dbReference type="PANTHER" id="PTHR12934:SF11">
    <property type="entry name" value="LARGE RIBOSOMAL SUBUNIT PROTEIN UL15M"/>
    <property type="match status" value="1"/>
</dbReference>
<dbReference type="Pfam" id="PF00828">
    <property type="entry name" value="Ribosomal_L27A"/>
    <property type="match status" value="1"/>
</dbReference>
<dbReference type="SUPFAM" id="SSF52080">
    <property type="entry name" value="Ribosomal proteins L15p and L18e"/>
    <property type="match status" value="1"/>
</dbReference>
<dbReference type="PROSITE" id="PS00475">
    <property type="entry name" value="RIBOSOMAL_L15"/>
    <property type="match status" value="1"/>
</dbReference>
<feature type="chain" id="PRO_1000214700" description="Large ribosomal subunit protein uL15">
    <location>
        <begin position="1"/>
        <end position="145"/>
    </location>
</feature>
<feature type="region of interest" description="Disordered" evidence="2">
    <location>
        <begin position="1"/>
        <end position="58"/>
    </location>
</feature>
<feature type="compositionally biased region" description="Gly residues" evidence="2">
    <location>
        <begin position="21"/>
        <end position="31"/>
    </location>
</feature>
<feature type="compositionally biased region" description="Gly residues" evidence="2">
    <location>
        <begin position="42"/>
        <end position="52"/>
    </location>
</feature>
<evidence type="ECO:0000255" key="1">
    <source>
        <dbReference type="HAMAP-Rule" id="MF_01341"/>
    </source>
</evidence>
<evidence type="ECO:0000256" key="2">
    <source>
        <dbReference type="SAM" id="MobiDB-lite"/>
    </source>
</evidence>
<evidence type="ECO:0000305" key="3"/>
<protein>
    <recommendedName>
        <fullName evidence="1">Large ribosomal subunit protein uL15</fullName>
    </recommendedName>
    <alternativeName>
        <fullName evidence="3">50S ribosomal protein L15</fullName>
    </alternativeName>
</protein>
<name>RL15_DESAH</name>
<reference key="1">
    <citation type="journal article" date="2009" name="Environ. Microbiol.">
        <title>Genome sequence of Desulfobacterium autotrophicum HRM2, a marine sulfate reducer oxidizing organic carbon completely to carbon dioxide.</title>
        <authorList>
            <person name="Strittmatter A.W."/>
            <person name="Liesegang H."/>
            <person name="Rabus R."/>
            <person name="Decker I."/>
            <person name="Amann J."/>
            <person name="Andres S."/>
            <person name="Henne A."/>
            <person name="Fricke W.F."/>
            <person name="Martinez-Arias R."/>
            <person name="Bartels D."/>
            <person name="Goesmann A."/>
            <person name="Krause L."/>
            <person name="Puehler A."/>
            <person name="Klenk H.P."/>
            <person name="Richter M."/>
            <person name="Schuler M."/>
            <person name="Gloeckner F.O."/>
            <person name="Meyerdierks A."/>
            <person name="Gottschalk G."/>
            <person name="Amann R."/>
        </authorList>
    </citation>
    <scope>NUCLEOTIDE SEQUENCE [LARGE SCALE GENOMIC DNA]</scope>
    <source>
        <strain>ATCC 43914 / DSM 3382 / VKM B-1955 / HRM2</strain>
    </source>
</reference>
<sequence>MKLHELSPSEGSRKKRKRVGRGPGSGMGGTSTRGNKGHNQRSGGGTRPGFEGGQMPLHRRLPKRGFKNILAKSILIVNLSDLDRFEDKAVIDVAALKQTGLIKGMFDKVKILGDGEVSKAFTFKQCLVSKTARQKIEAAGGSIEL</sequence>
<gene>
    <name evidence="1" type="primary">rplO</name>
    <name type="ordered locus">HRM2_36070</name>
</gene>
<comment type="function">
    <text evidence="1">Binds to the 23S rRNA.</text>
</comment>
<comment type="subunit">
    <text evidence="1">Part of the 50S ribosomal subunit.</text>
</comment>
<comment type="similarity">
    <text evidence="1">Belongs to the universal ribosomal protein uL15 family.</text>
</comment>
<proteinExistence type="inferred from homology"/>
<organism>
    <name type="scientific">Desulforapulum autotrophicum (strain ATCC 43914 / DSM 3382 / VKM B-1955 / HRM2)</name>
    <name type="common">Desulfobacterium autotrophicum</name>
    <dbReference type="NCBI Taxonomy" id="177437"/>
    <lineage>
        <taxon>Bacteria</taxon>
        <taxon>Pseudomonadati</taxon>
        <taxon>Thermodesulfobacteriota</taxon>
        <taxon>Desulfobacteria</taxon>
        <taxon>Desulfobacterales</taxon>
        <taxon>Desulfobacteraceae</taxon>
        <taxon>Desulforapulum</taxon>
    </lineage>
</organism>
<keyword id="KW-1185">Reference proteome</keyword>
<keyword id="KW-0687">Ribonucleoprotein</keyword>
<keyword id="KW-0689">Ribosomal protein</keyword>
<keyword id="KW-0694">RNA-binding</keyword>
<keyword id="KW-0699">rRNA-binding</keyword>
<accession>C0Q9V4</accession>